<evidence type="ECO:0000250" key="1">
    <source>
        <dbReference type="UniProtKB" id="Q0PNE2"/>
    </source>
</evidence>
<evidence type="ECO:0000269" key="2">
    <source>
    </source>
</evidence>
<evidence type="ECO:0000269" key="3">
    <source>
    </source>
</evidence>
<evidence type="ECO:0000269" key="4">
    <source>
    </source>
</evidence>
<evidence type="ECO:0000303" key="5">
    <source>
    </source>
</evidence>
<evidence type="ECO:0000305" key="6"/>
<evidence type="ECO:0000305" key="7">
    <source>
    </source>
</evidence>
<evidence type="ECO:0000312" key="8">
    <source>
        <dbReference type="EMBL" id="AAF40432.1"/>
    </source>
</evidence>
<evidence type="ECO:0000312" key="9">
    <source>
        <dbReference type="EMBL" id="ACO34925.1"/>
    </source>
</evidence>
<evidence type="ECO:0000312" key="10">
    <source>
        <dbReference type="FlyBase" id="FBgn0086371"/>
    </source>
</evidence>
<evidence type="ECO:0000312" key="11">
    <source>
        <dbReference type="Proteomes" id="UP000000803"/>
    </source>
</evidence>
<sequence length="251" mass="27941">MATSVLLACGLNEQKLPGFVHISEESNVDASFLISCVLGQRLRISNAGTLLVCLQHHYQHYFNAGMRLGYNTNIFQGKTLGVIDVLSDMAGEGLASKWLTNTEGQTLTDQLVEDIRAQVERNYASRNSYTVLIDNLSILFNLGASKLQVQQFCQDLAALGKEREKLTVITKLSNSDIYQLTDNNVAKLGQVRIQVLRLKSGVFREVDGKLLIERVLDEGNYACEETRKEVLYKVNDRNVKVFAPGEIGVKV</sequence>
<keyword id="KW-0963">Cytoplasm</keyword>
<keyword id="KW-0206">Cytoskeleton</keyword>
<keyword id="KW-0493">Microtubule</keyword>
<keyword id="KW-0539">Nucleus</keyword>
<keyword id="KW-1185">Reference proteome</keyword>
<protein>
    <recommendedName>
        <fullName evidence="6">Elongator complex protein 6</fullName>
    </recommendedName>
</protein>
<reference evidence="8" key="1">
    <citation type="submission" date="2000-02" db="EMBL/GenBank/DDBJ databases">
        <title>Drosophila melanogaster 'did' ORF.</title>
        <authorList>
            <person name="Vass S."/>
            <person name="Heck M."/>
        </authorList>
    </citation>
    <scope>NUCLEOTIDE SEQUENCE [MRNA]</scope>
</reference>
<reference evidence="11" key="2">
    <citation type="journal article" date="2000" name="Science">
        <title>The genome sequence of Drosophila melanogaster.</title>
        <authorList>
            <person name="Adams M.D."/>
            <person name="Celniker S.E."/>
            <person name="Holt R.A."/>
            <person name="Evans C.A."/>
            <person name="Gocayne J.D."/>
            <person name="Amanatides P.G."/>
            <person name="Scherer S.E."/>
            <person name="Li P.W."/>
            <person name="Hoskins R.A."/>
            <person name="Galle R.F."/>
            <person name="George R.A."/>
            <person name="Lewis S.E."/>
            <person name="Richards S."/>
            <person name="Ashburner M."/>
            <person name="Henderson S.N."/>
            <person name="Sutton G.G."/>
            <person name="Wortman J.R."/>
            <person name="Yandell M.D."/>
            <person name="Zhang Q."/>
            <person name="Chen L.X."/>
            <person name="Brandon R.C."/>
            <person name="Rogers Y.-H.C."/>
            <person name="Blazej R.G."/>
            <person name="Champe M."/>
            <person name="Pfeiffer B.D."/>
            <person name="Wan K.H."/>
            <person name="Doyle C."/>
            <person name="Baxter E.G."/>
            <person name="Helt G."/>
            <person name="Nelson C.R."/>
            <person name="Miklos G.L.G."/>
            <person name="Abril J.F."/>
            <person name="Agbayani A."/>
            <person name="An H.-J."/>
            <person name="Andrews-Pfannkoch C."/>
            <person name="Baldwin D."/>
            <person name="Ballew R.M."/>
            <person name="Basu A."/>
            <person name="Baxendale J."/>
            <person name="Bayraktaroglu L."/>
            <person name="Beasley E.M."/>
            <person name="Beeson K.Y."/>
            <person name="Benos P.V."/>
            <person name="Berman B.P."/>
            <person name="Bhandari D."/>
            <person name="Bolshakov S."/>
            <person name="Borkova D."/>
            <person name="Botchan M.R."/>
            <person name="Bouck J."/>
            <person name="Brokstein P."/>
            <person name="Brottier P."/>
            <person name="Burtis K.C."/>
            <person name="Busam D.A."/>
            <person name="Butler H."/>
            <person name="Cadieu E."/>
            <person name="Center A."/>
            <person name="Chandra I."/>
            <person name="Cherry J.M."/>
            <person name="Cawley S."/>
            <person name="Dahlke C."/>
            <person name="Davenport L.B."/>
            <person name="Davies P."/>
            <person name="de Pablos B."/>
            <person name="Delcher A."/>
            <person name="Deng Z."/>
            <person name="Mays A.D."/>
            <person name="Dew I."/>
            <person name="Dietz S.M."/>
            <person name="Dodson K."/>
            <person name="Doup L.E."/>
            <person name="Downes M."/>
            <person name="Dugan-Rocha S."/>
            <person name="Dunkov B.C."/>
            <person name="Dunn P."/>
            <person name="Durbin K.J."/>
            <person name="Evangelista C.C."/>
            <person name="Ferraz C."/>
            <person name="Ferriera S."/>
            <person name="Fleischmann W."/>
            <person name="Fosler C."/>
            <person name="Gabrielian A.E."/>
            <person name="Garg N.S."/>
            <person name="Gelbart W.M."/>
            <person name="Glasser K."/>
            <person name="Glodek A."/>
            <person name="Gong F."/>
            <person name="Gorrell J.H."/>
            <person name="Gu Z."/>
            <person name="Guan P."/>
            <person name="Harris M."/>
            <person name="Harris N.L."/>
            <person name="Harvey D.A."/>
            <person name="Heiman T.J."/>
            <person name="Hernandez J.R."/>
            <person name="Houck J."/>
            <person name="Hostin D."/>
            <person name="Houston K.A."/>
            <person name="Howland T.J."/>
            <person name="Wei M.-H."/>
            <person name="Ibegwam C."/>
            <person name="Jalali M."/>
            <person name="Kalush F."/>
            <person name="Karpen G.H."/>
            <person name="Ke Z."/>
            <person name="Kennison J.A."/>
            <person name="Ketchum K.A."/>
            <person name="Kimmel B.E."/>
            <person name="Kodira C.D."/>
            <person name="Kraft C.L."/>
            <person name="Kravitz S."/>
            <person name="Kulp D."/>
            <person name="Lai Z."/>
            <person name="Lasko P."/>
            <person name="Lei Y."/>
            <person name="Levitsky A.A."/>
            <person name="Li J.H."/>
            <person name="Li Z."/>
            <person name="Liang Y."/>
            <person name="Lin X."/>
            <person name="Liu X."/>
            <person name="Mattei B."/>
            <person name="McIntosh T.C."/>
            <person name="McLeod M.P."/>
            <person name="McPherson D."/>
            <person name="Merkulov G."/>
            <person name="Milshina N.V."/>
            <person name="Mobarry C."/>
            <person name="Morris J."/>
            <person name="Moshrefi A."/>
            <person name="Mount S.M."/>
            <person name="Moy M."/>
            <person name="Murphy B."/>
            <person name="Murphy L."/>
            <person name="Muzny D.M."/>
            <person name="Nelson D.L."/>
            <person name="Nelson D.R."/>
            <person name="Nelson K.A."/>
            <person name="Nixon K."/>
            <person name="Nusskern D.R."/>
            <person name="Pacleb J.M."/>
            <person name="Palazzolo M."/>
            <person name="Pittman G.S."/>
            <person name="Pan S."/>
            <person name="Pollard J."/>
            <person name="Puri V."/>
            <person name="Reese M.G."/>
            <person name="Reinert K."/>
            <person name="Remington K."/>
            <person name="Saunders R.D.C."/>
            <person name="Scheeler F."/>
            <person name="Shen H."/>
            <person name="Shue B.C."/>
            <person name="Siden-Kiamos I."/>
            <person name="Simpson M."/>
            <person name="Skupski M.P."/>
            <person name="Smith T.J."/>
            <person name="Spier E."/>
            <person name="Spradling A.C."/>
            <person name="Stapleton M."/>
            <person name="Strong R."/>
            <person name="Sun E."/>
            <person name="Svirskas R."/>
            <person name="Tector C."/>
            <person name="Turner R."/>
            <person name="Venter E."/>
            <person name="Wang A.H."/>
            <person name="Wang X."/>
            <person name="Wang Z.-Y."/>
            <person name="Wassarman D.A."/>
            <person name="Weinstock G.M."/>
            <person name="Weissenbach J."/>
            <person name="Williams S.M."/>
            <person name="Woodage T."/>
            <person name="Worley K.C."/>
            <person name="Wu D."/>
            <person name="Yang S."/>
            <person name="Yao Q.A."/>
            <person name="Ye J."/>
            <person name="Yeh R.-F."/>
            <person name="Zaveri J.S."/>
            <person name="Zhan M."/>
            <person name="Zhang G."/>
            <person name="Zhao Q."/>
            <person name="Zheng L."/>
            <person name="Zheng X.H."/>
            <person name="Zhong F.N."/>
            <person name="Zhong W."/>
            <person name="Zhou X."/>
            <person name="Zhu S.C."/>
            <person name="Zhu X."/>
            <person name="Smith H.O."/>
            <person name="Gibbs R.A."/>
            <person name="Myers E.W."/>
            <person name="Rubin G.M."/>
            <person name="Venter J.C."/>
        </authorList>
    </citation>
    <scope>NUCLEOTIDE SEQUENCE [LARGE SCALE GENOMIC DNA]</scope>
    <source>
        <strain evidence="11">Berkeley</strain>
    </source>
</reference>
<reference evidence="11" key="3">
    <citation type="journal article" date="2002" name="Genome Biol.">
        <title>Annotation of the Drosophila melanogaster euchromatic genome: a systematic review.</title>
        <authorList>
            <person name="Misra S."/>
            <person name="Crosby M.A."/>
            <person name="Mungall C.J."/>
            <person name="Matthews B.B."/>
            <person name="Campbell K.S."/>
            <person name="Hradecky P."/>
            <person name="Huang Y."/>
            <person name="Kaminker J.S."/>
            <person name="Millburn G.H."/>
            <person name="Prochnik S.E."/>
            <person name="Smith C.D."/>
            <person name="Tupy J.L."/>
            <person name="Whitfield E.J."/>
            <person name="Bayraktaroglu L."/>
            <person name="Berman B.P."/>
            <person name="Bettencourt B.R."/>
            <person name="Celniker S.E."/>
            <person name="de Grey A.D.N.J."/>
            <person name="Drysdale R.A."/>
            <person name="Harris N.L."/>
            <person name="Richter J."/>
            <person name="Russo S."/>
            <person name="Schroeder A.J."/>
            <person name="Shu S.Q."/>
            <person name="Stapleton M."/>
            <person name="Yamada C."/>
            <person name="Ashburner M."/>
            <person name="Gelbart W.M."/>
            <person name="Rubin G.M."/>
            <person name="Lewis S.E."/>
        </authorList>
    </citation>
    <scope>GENOME REANNOTATION</scope>
    <source>
        <strain evidence="11">Berkeley</strain>
    </source>
</reference>
<reference evidence="9" key="4">
    <citation type="submission" date="2009-03" db="EMBL/GenBank/DDBJ databases">
        <authorList>
            <person name="Carlson J."/>
            <person name="Booth B."/>
            <person name="Frise E."/>
            <person name="Sandler J."/>
            <person name="Wan K."/>
            <person name="Yu C."/>
            <person name="Celniker S."/>
        </authorList>
    </citation>
    <scope>NUCLEOTIDE SEQUENCE [LARGE SCALE MRNA]</scope>
</reference>
<reference evidence="6" key="5">
    <citation type="journal article" date="2010" name="Fly">
        <title>poly is required for nurse-cell chromosome dispersal and oocyte polarity in Drosophila.</title>
        <authorList>
            <person name="Klusza S."/>
            <person name="Deng W.M."/>
        </authorList>
    </citation>
    <scope>FUNCTION</scope>
</reference>
<reference evidence="6" key="6">
    <citation type="journal article" date="2012" name="Open Biol.">
        <title>Drosophila poly suggests a novel role for the Elongator complex in insulin receptor-target of rapamycin signalling.</title>
        <authorList>
            <person name="Bolukbasi E."/>
            <person name="Vass S."/>
            <person name="Cobbe N."/>
            <person name="Nelson B."/>
            <person name="Simossis V."/>
            <person name="Dunbar D.R."/>
            <person name="Heck M.M."/>
        </authorList>
    </citation>
    <scope>FUNCTION</scope>
    <scope>INTERACTION WITH INR</scope>
    <scope>SUBCELLULAR LOCATION</scope>
    <scope>DEVELOPMENTAL STAGE</scope>
    <scope>DISRUPTION PHENOTYPE</scope>
</reference>
<reference evidence="6" key="7">
    <citation type="journal article" date="2022" name="Nat. Cell Biol.">
        <title>Elongator stabilizes microtubules to control central spindle asymmetry and polarized trafficking of cell fate determinants.</title>
        <authorList>
            <person name="Planelles-Herrero V.J."/>
            <person name="Bittleston A."/>
            <person name="Seum C."/>
            <person name="Daeden A."/>
            <person name="Gaitan M.G."/>
            <person name="Derivery E."/>
        </authorList>
    </citation>
    <scope>FUNCTION</scope>
    <scope>IDENTIFICATION IN THE ELONGATOR COMPLEX</scope>
    <scope>IDENTIFICATION BY MASS SPECTROMETRY</scope>
</reference>
<dbReference type="EMBL" id="AF234629">
    <property type="protein sequence ID" value="AAF40432.1"/>
    <property type="molecule type" value="mRNA"/>
</dbReference>
<dbReference type="EMBL" id="AE014297">
    <property type="protein sequence ID" value="AAF54931.1"/>
    <property type="molecule type" value="Genomic_DNA"/>
</dbReference>
<dbReference type="EMBL" id="AE014297">
    <property type="protein sequence ID" value="ADV37306.1"/>
    <property type="molecule type" value="Genomic_DNA"/>
</dbReference>
<dbReference type="EMBL" id="BT081367">
    <property type="protein sequence ID" value="ACO34925.1"/>
    <property type="molecule type" value="mRNA"/>
</dbReference>
<dbReference type="RefSeq" id="NP_001189215.1">
    <property type="nucleotide sequence ID" value="NM_001202286.1"/>
</dbReference>
<dbReference type="RefSeq" id="NP_524343.2">
    <property type="nucleotide sequence ID" value="NM_079619.4"/>
</dbReference>
<dbReference type="SMR" id="Q9VFW4"/>
<dbReference type="ComplexPortal" id="CPX-10346">
    <property type="entry name" value="Elongator holoenzyme complex"/>
</dbReference>
<dbReference type="FunCoup" id="Q9VFW4">
    <property type="interactions" value="328"/>
</dbReference>
<dbReference type="IntAct" id="Q9VFW4">
    <property type="interactions" value="9"/>
</dbReference>
<dbReference type="STRING" id="7227.FBpp0292357"/>
<dbReference type="PaxDb" id="7227-FBpp0292357"/>
<dbReference type="DNASU" id="41641"/>
<dbReference type="EnsemblMetazoa" id="FBtr0082772">
    <property type="protein sequence ID" value="FBpp0082240"/>
    <property type="gene ID" value="FBgn0086371"/>
</dbReference>
<dbReference type="EnsemblMetazoa" id="FBtr0303265">
    <property type="protein sequence ID" value="FBpp0292357"/>
    <property type="gene ID" value="FBgn0086371"/>
</dbReference>
<dbReference type="GeneID" id="41641"/>
<dbReference type="KEGG" id="dme:Dmel_CG9829"/>
<dbReference type="UCSC" id="CG9829-RA">
    <property type="organism name" value="d. melanogaster"/>
</dbReference>
<dbReference type="AGR" id="FB:FBgn0086371"/>
<dbReference type="CTD" id="54859"/>
<dbReference type="FlyBase" id="FBgn0086371">
    <property type="gene designation" value="Elp6"/>
</dbReference>
<dbReference type="VEuPathDB" id="VectorBase:FBgn0086371"/>
<dbReference type="eggNOG" id="ENOG502SA6Q">
    <property type="taxonomic scope" value="Eukaryota"/>
</dbReference>
<dbReference type="HOGENOM" id="CLU_092581_0_0_1"/>
<dbReference type="OMA" id="NVKIFNP"/>
<dbReference type="OrthoDB" id="9995306at2759"/>
<dbReference type="UniPathway" id="UPA00988"/>
<dbReference type="BioGRID-ORCS" id="41641">
    <property type="hits" value="1 hit in 1 CRISPR screen"/>
</dbReference>
<dbReference type="GenomeRNAi" id="41641"/>
<dbReference type="Proteomes" id="UP000000803">
    <property type="component" value="Chromosome 3R"/>
</dbReference>
<dbReference type="Bgee" id="FBgn0086371">
    <property type="expression patterns" value="Expressed in eye disc (Drosophila) and 153 other cell types or tissues"/>
</dbReference>
<dbReference type="ExpressionAtlas" id="Q9VFW4">
    <property type="expression patterns" value="baseline and differential"/>
</dbReference>
<dbReference type="GO" id="GO:0005829">
    <property type="term" value="C:cytosol"/>
    <property type="evidence" value="ECO:0000250"/>
    <property type="project" value="FlyBase"/>
</dbReference>
<dbReference type="GO" id="GO:0033588">
    <property type="term" value="C:elongator holoenzyme complex"/>
    <property type="evidence" value="ECO:0000314"/>
    <property type="project" value="FlyBase"/>
</dbReference>
<dbReference type="GO" id="GO:0005874">
    <property type="term" value="C:microtubule"/>
    <property type="evidence" value="ECO:0007669"/>
    <property type="project" value="UniProtKB-KW"/>
</dbReference>
<dbReference type="GO" id="GO:0005634">
    <property type="term" value="C:nucleus"/>
    <property type="evidence" value="ECO:0000250"/>
    <property type="project" value="FlyBase"/>
</dbReference>
<dbReference type="GO" id="GO:0005819">
    <property type="term" value="C:spindle"/>
    <property type="evidence" value="ECO:0007669"/>
    <property type="project" value="UniProtKB-SubCell"/>
</dbReference>
<dbReference type="GO" id="GO:0005158">
    <property type="term" value="F:insulin receptor binding"/>
    <property type="evidence" value="ECO:0000314"/>
    <property type="project" value="FlyBase"/>
</dbReference>
<dbReference type="GO" id="GO:0061867">
    <property type="term" value="P:establishment of mitotic spindle asymmetry"/>
    <property type="evidence" value="ECO:0000314"/>
    <property type="project" value="FlyBase"/>
</dbReference>
<dbReference type="GO" id="GO:0035011">
    <property type="term" value="P:melanotic encapsulation of foreign target"/>
    <property type="evidence" value="ECO:0000315"/>
    <property type="project" value="FlyBase"/>
</dbReference>
<dbReference type="GO" id="GO:0008103">
    <property type="term" value="P:oocyte microtubule cytoskeleton polarization"/>
    <property type="evidence" value="ECO:0000314"/>
    <property type="project" value="FlyBase"/>
</dbReference>
<dbReference type="GO" id="GO:0046628">
    <property type="term" value="P:positive regulation of insulin receptor signaling pathway"/>
    <property type="evidence" value="ECO:0000315"/>
    <property type="project" value="FlyBase"/>
</dbReference>
<dbReference type="GO" id="GO:0002098">
    <property type="term" value="P:tRNA wobble uridine modification"/>
    <property type="evidence" value="ECO:0007669"/>
    <property type="project" value="InterPro"/>
</dbReference>
<dbReference type="CDD" id="cd19495">
    <property type="entry name" value="Elp6"/>
    <property type="match status" value="1"/>
</dbReference>
<dbReference type="FunFam" id="3.40.50.300:FF:002506">
    <property type="entry name" value="Uncharacterized protein, isoform A"/>
    <property type="match status" value="1"/>
</dbReference>
<dbReference type="Gene3D" id="3.40.50.300">
    <property type="entry name" value="P-loop containing nucleotide triphosphate hydrolases"/>
    <property type="match status" value="1"/>
</dbReference>
<dbReference type="InterPro" id="IPR018627">
    <property type="entry name" value="ELP6"/>
</dbReference>
<dbReference type="InterPro" id="IPR027417">
    <property type="entry name" value="P-loop_NTPase"/>
</dbReference>
<dbReference type="PANTHER" id="PTHR16184">
    <property type="entry name" value="ELONGATOR COMPLEX PROTEIN 6"/>
    <property type="match status" value="1"/>
</dbReference>
<dbReference type="PANTHER" id="PTHR16184:SF6">
    <property type="entry name" value="ELONGATOR COMPLEX PROTEIN 6"/>
    <property type="match status" value="1"/>
</dbReference>
<dbReference type="Pfam" id="PF09807">
    <property type="entry name" value="ELP6"/>
    <property type="match status" value="1"/>
</dbReference>
<feature type="chain" id="PRO_0000460690" description="Elongator complex protein 6">
    <location>
        <begin position="1"/>
        <end position="251"/>
    </location>
</feature>
<feature type="sequence conflict" description="In Ref. 1; AAF40432." evidence="6" ref="1">
    <original>A</original>
    <variation>G</variation>
    <location>
        <position position="30"/>
    </location>
</feature>
<feature type="sequence conflict" description="In Ref. 1; AAF40432." evidence="6" ref="1">
    <original>D</original>
    <variation>E</variation>
    <location>
        <position position="109"/>
    </location>
</feature>
<feature type="sequence conflict" description="In Ref. 1; AAF40432." evidence="6" ref="1">
    <original>RNYAS</original>
    <variation>SNYAN</variation>
    <location>
        <begin position="121"/>
        <end position="125"/>
    </location>
</feature>
<comment type="function">
    <text evidence="2 3 4">Component of the elongator complex, which is required for multiple tRNA modifications, including mcm5U (5-methoxycarbonylmethyl uridine), mcm5s2U (5-methoxycarbonylmethyl-2-thiouridine), and ncm5U (5-carbamoylmethyl uridine) (PubMed:36302967). The elongator complex catalyzes formation of carboxymethyluridine in the wobble base at position 34 in tRNAs (PubMed:36302967). Binding by the elongator complex stabilizes microtubules and promotes their growth (PubMed:36302967). This induces central spindle asymmetry, promoting polarized signaling endosome trafficking during asymmetric cell division and cell fate assignation of sensory organ precursor cells (PubMed:36302967). Required in germ line cells for microtubule organization involved in oocyte polarization and chromosome organization (PubMed:20473032). Involved in InR-TOR (insulin-like receptor-target of rapamycin) signaling regulation of cellular metabolism, autophagy and apoptosis (PubMed:22645656).</text>
</comment>
<comment type="pathway">
    <text evidence="1">tRNA modification; 5-methoxycarbonylmethyl-2-thiouridine-tRNA biosynthesis.</text>
</comment>
<comment type="subunit">
    <text evidence="3 4">Component of the elongator complex composed of Elp1, Elp2, Elp3, Elp4, Elp5 and Elp6 (PubMed:36302967). The elongator complex associates with and stabilizes microtubules; efficient interaction requires the full complex (PubMed:36302967). Interacts with InR/Insulin-like receptor; the interaction may stabilize Elp6 (PubMed:22645656).</text>
</comment>
<comment type="subcellular location">
    <subcellularLocation>
        <location evidence="3">Cytoplasm</location>
    </subcellularLocation>
    <subcellularLocation>
        <location evidence="3">Nucleus</location>
    </subcellularLocation>
    <subcellularLocation>
        <location evidence="7">Cytoplasm</location>
        <location evidence="7">Cytoskeleton</location>
        <location evidence="7">Spindle</location>
    </subcellularLocation>
    <text evidence="3 4">Concentrates in the nucleus upon insulin stimulation (PubMed:22645656). During asymmetric cell division of sensory organ precursor cells the elongator complex preferentially binds and stabilizes microtubules on the anterior side (pIIb daughter cell) of the spindle (PubMed:36302967).</text>
</comment>
<comment type="developmental stage">
    <text evidence="3">Highly expressed during embryogenesis and at lower levels throughout development (at protein level) (PubMed:22645656). Expressed both maternally and zygotically (PubMed:22645656).</text>
</comment>
<comment type="disruption phenotype">
    <text evidence="3">Larval lethal with developmental delay; larvae spend twice as long in third instar stage and die before pupating (PubMed:22645656). Larvae display abnormal tissue morphology with reduced size brain, ring gland, salivary glands and imaginal discs (PubMed:22645656). Larval neuroblasts have abnormally shaped nuclei (PubMed:22645656). Formation of melanotic masses in the hemolymph of third instar larvae, increasing in size and number over time (PubMed:22645656).</text>
</comment>
<comment type="miscellaneous">
    <text evidence="5">Named 'poly' for the abnormal shape of larval neuroblast nuclei that resemble the nuclei of mammalian polymorphonuclear leukocytes.</text>
</comment>
<comment type="similarity">
    <text evidence="6">Belongs to the ELP6 family.</text>
</comment>
<comment type="caution">
    <text evidence="1">The elongator complex was originally thought to play a role in transcription elongation. However, it is no longer thought to play a direct role in this process and its primary function is thought to be in tRNA modification.</text>
</comment>
<organism evidence="11">
    <name type="scientific">Drosophila melanogaster</name>
    <name type="common">Fruit fly</name>
    <dbReference type="NCBI Taxonomy" id="7227"/>
    <lineage>
        <taxon>Eukaryota</taxon>
        <taxon>Metazoa</taxon>
        <taxon>Ecdysozoa</taxon>
        <taxon>Arthropoda</taxon>
        <taxon>Hexapoda</taxon>
        <taxon>Insecta</taxon>
        <taxon>Pterygota</taxon>
        <taxon>Neoptera</taxon>
        <taxon>Endopterygota</taxon>
        <taxon>Diptera</taxon>
        <taxon>Brachycera</taxon>
        <taxon>Muscomorpha</taxon>
        <taxon>Ephydroidea</taxon>
        <taxon>Drosophilidae</taxon>
        <taxon>Drosophila</taxon>
        <taxon>Sophophora</taxon>
    </lineage>
</organism>
<name>ELP6_DROME</name>
<gene>
    <name evidence="10" type="primary">Elp6</name>
    <name evidence="10" type="synonym">did</name>
    <name evidence="10" type="synonym">poly</name>
    <name evidence="10" type="ORF">CG9829</name>
</gene>
<proteinExistence type="evidence at protein level"/>
<accession>Q9VFW4</accession>
<accession>Q9NH01</accession>